<proteinExistence type="evidence at transcript level"/>
<accession>Q2KIT4</accession>
<sequence length="337" mass="37851">MGKDYYCILGIEKGASDEDIKKAYRKQALRFHPDKNKSPQAEERFKEVAEAYEVLSDPKKREIYDQFGEEGLKGGAGGTDGQGGTFRYTFHGDPHATFAAFFGGSNPFEIFFGRRMGGGRDSDEMEVDGDPFGAFGFSMNGYPRDRNSVGPSRLKQDPPVIHELRVSLEEIYSGCTKRMKISRKRLNPDGRSYRTEDKILTIEIKKGWKEGTKITFPREGDETPTSIPADIVFVIKDKDHPKFKRDGSNIIYTAKISLREALCGCSINVPTMDGRTIPMTINDIVKPGMRRRIIGYGLPFPKNPDQRGDLLIEFEVSFPDTISSSSKEVLRKHLPAS</sequence>
<reference key="1">
    <citation type="submission" date="2006-01" db="EMBL/GenBank/DDBJ databases">
        <authorList>
            <consortium name="NIH - Mammalian Gene Collection (MGC) project"/>
        </authorList>
    </citation>
    <scope>NUCLEOTIDE SEQUENCE [LARGE SCALE MRNA]</scope>
    <source>
        <strain>Hereford</strain>
        <tissue>Testis</tissue>
    </source>
</reference>
<feature type="chain" id="PRO_0000286174" description="DnaJ homolog subfamily B member 4">
    <location>
        <begin position="1"/>
        <end position="337"/>
    </location>
</feature>
<feature type="domain" description="J" evidence="2">
    <location>
        <begin position="2"/>
        <end position="70"/>
    </location>
</feature>
<feature type="modified residue" description="Phosphoserine" evidence="1">
    <location>
        <position position="122"/>
    </location>
</feature>
<feature type="modified residue" description="Phosphoserine" evidence="1">
    <location>
        <position position="148"/>
    </location>
</feature>
<evidence type="ECO:0000250" key="1">
    <source>
        <dbReference type="UniProtKB" id="Q9UDY4"/>
    </source>
</evidence>
<evidence type="ECO:0000255" key="2">
    <source>
        <dbReference type="PROSITE-ProRule" id="PRU00286"/>
    </source>
</evidence>
<dbReference type="EMBL" id="BC112518">
    <property type="protein sequence ID" value="AAI12519.1"/>
    <property type="molecule type" value="mRNA"/>
</dbReference>
<dbReference type="RefSeq" id="NP_001039968.1">
    <property type="nucleotide sequence ID" value="NM_001046503.1"/>
</dbReference>
<dbReference type="RefSeq" id="XP_059740822.1">
    <property type="nucleotide sequence ID" value="XM_059884839.1"/>
</dbReference>
<dbReference type="SMR" id="Q2KIT4"/>
<dbReference type="FunCoup" id="Q2KIT4">
    <property type="interactions" value="1812"/>
</dbReference>
<dbReference type="STRING" id="9913.ENSBTAP00000028994"/>
<dbReference type="PaxDb" id="9913-ENSBTAP00000028994"/>
<dbReference type="Ensembl" id="ENSBTAT00000028994.6">
    <property type="protein sequence ID" value="ENSBTAP00000028994.4"/>
    <property type="gene ID" value="ENSBTAG00000021752.6"/>
</dbReference>
<dbReference type="GeneID" id="541274"/>
<dbReference type="KEGG" id="bta:541274"/>
<dbReference type="CTD" id="11080"/>
<dbReference type="VEuPathDB" id="HostDB:ENSBTAG00000021752"/>
<dbReference type="VGNC" id="VGNC:55166">
    <property type="gene designation" value="DNAJB4"/>
</dbReference>
<dbReference type="eggNOG" id="KOG0714">
    <property type="taxonomic scope" value="Eukaryota"/>
</dbReference>
<dbReference type="GeneTree" id="ENSGT00940000156826"/>
<dbReference type="HOGENOM" id="CLU_017633_0_0_1"/>
<dbReference type="InParanoid" id="Q2KIT4"/>
<dbReference type="OMA" id="MPIRKEG"/>
<dbReference type="OrthoDB" id="550424at2759"/>
<dbReference type="TreeFam" id="TF105141"/>
<dbReference type="Proteomes" id="UP000009136">
    <property type="component" value="Chromosome 3"/>
</dbReference>
<dbReference type="Bgee" id="ENSBTAG00000021752">
    <property type="expression patterns" value="Expressed in gluteal muscle and 105 other cell types or tissues"/>
</dbReference>
<dbReference type="GO" id="GO:0005829">
    <property type="term" value="C:cytosol"/>
    <property type="evidence" value="ECO:0000318"/>
    <property type="project" value="GO_Central"/>
</dbReference>
<dbReference type="GO" id="GO:0005654">
    <property type="term" value="C:nucleoplasm"/>
    <property type="evidence" value="ECO:0007669"/>
    <property type="project" value="Ensembl"/>
</dbReference>
<dbReference type="GO" id="GO:0005886">
    <property type="term" value="C:plasma membrane"/>
    <property type="evidence" value="ECO:0007669"/>
    <property type="project" value="UniProtKB-SubCell"/>
</dbReference>
<dbReference type="GO" id="GO:0030018">
    <property type="term" value="C:Z disc"/>
    <property type="evidence" value="ECO:0007669"/>
    <property type="project" value="Ensembl"/>
</dbReference>
<dbReference type="GO" id="GO:0001671">
    <property type="term" value="F:ATPase activator activity"/>
    <property type="evidence" value="ECO:0000250"/>
    <property type="project" value="UniProtKB"/>
</dbReference>
<dbReference type="GO" id="GO:0051087">
    <property type="term" value="F:protein-folding chaperone binding"/>
    <property type="evidence" value="ECO:0000318"/>
    <property type="project" value="GO_Central"/>
</dbReference>
<dbReference type="GO" id="GO:0051082">
    <property type="term" value="F:unfolded protein binding"/>
    <property type="evidence" value="ECO:0000318"/>
    <property type="project" value="GO_Central"/>
</dbReference>
<dbReference type="GO" id="GO:0051085">
    <property type="term" value="P:chaperone cofactor-dependent protein refolding"/>
    <property type="evidence" value="ECO:0000318"/>
    <property type="project" value="GO_Central"/>
</dbReference>
<dbReference type="GO" id="GO:0000122">
    <property type="term" value="P:negative regulation of transcription by RNA polymerase II"/>
    <property type="evidence" value="ECO:0000318"/>
    <property type="project" value="GO_Central"/>
</dbReference>
<dbReference type="CDD" id="cd06257">
    <property type="entry name" value="DnaJ"/>
    <property type="match status" value="1"/>
</dbReference>
<dbReference type="CDD" id="cd10747">
    <property type="entry name" value="DnaJ_C"/>
    <property type="match status" value="1"/>
</dbReference>
<dbReference type="FunFam" id="1.10.287.110:FF:000005">
    <property type="entry name" value="DnaJ (Hsp40) homolog, subfamily B, member 4"/>
    <property type="match status" value="1"/>
</dbReference>
<dbReference type="FunFam" id="2.60.260.20:FF:000002">
    <property type="entry name" value="Dnaj homolog subfamily b member"/>
    <property type="match status" value="1"/>
</dbReference>
<dbReference type="FunFam" id="2.60.260.20:FF:000007">
    <property type="entry name" value="dnaJ homolog subfamily B member 5"/>
    <property type="match status" value="1"/>
</dbReference>
<dbReference type="Gene3D" id="1.10.287.110">
    <property type="entry name" value="DnaJ domain"/>
    <property type="match status" value="1"/>
</dbReference>
<dbReference type="Gene3D" id="2.60.260.20">
    <property type="entry name" value="Urease metallochaperone UreE, N-terminal domain"/>
    <property type="match status" value="2"/>
</dbReference>
<dbReference type="InterPro" id="IPR002939">
    <property type="entry name" value="DnaJ_C"/>
</dbReference>
<dbReference type="InterPro" id="IPR001623">
    <property type="entry name" value="DnaJ_domain"/>
</dbReference>
<dbReference type="InterPro" id="IPR018253">
    <property type="entry name" value="DnaJ_domain_CS"/>
</dbReference>
<dbReference type="InterPro" id="IPR051339">
    <property type="entry name" value="DnaJ_subfamily_B"/>
</dbReference>
<dbReference type="InterPro" id="IPR008971">
    <property type="entry name" value="HSP40/DnaJ_pept-bd"/>
</dbReference>
<dbReference type="InterPro" id="IPR036869">
    <property type="entry name" value="J_dom_sf"/>
</dbReference>
<dbReference type="PANTHER" id="PTHR24078:SF288">
    <property type="entry name" value="DNAJ HOMOLOG SUBFAMILY B MEMBER 4"/>
    <property type="match status" value="1"/>
</dbReference>
<dbReference type="PANTHER" id="PTHR24078">
    <property type="entry name" value="DNAJ HOMOLOG SUBFAMILY C MEMBER"/>
    <property type="match status" value="1"/>
</dbReference>
<dbReference type="Pfam" id="PF00226">
    <property type="entry name" value="DnaJ"/>
    <property type="match status" value="1"/>
</dbReference>
<dbReference type="Pfam" id="PF01556">
    <property type="entry name" value="DnaJ_C"/>
    <property type="match status" value="1"/>
</dbReference>
<dbReference type="PRINTS" id="PR00625">
    <property type="entry name" value="JDOMAIN"/>
</dbReference>
<dbReference type="SMART" id="SM00271">
    <property type="entry name" value="DnaJ"/>
    <property type="match status" value="1"/>
</dbReference>
<dbReference type="SUPFAM" id="SSF46565">
    <property type="entry name" value="Chaperone J-domain"/>
    <property type="match status" value="1"/>
</dbReference>
<dbReference type="SUPFAM" id="SSF49493">
    <property type="entry name" value="HSP40/DnaJ peptide-binding domain"/>
    <property type="match status" value="2"/>
</dbReference>
<dbReference type="PROSITE" id="PS00636">
    <property type="entry name" value="DNAJ_1"/>
    <property type="match status" value="1"/>
</dbReference>
<dbReference type="PROSITE" id="PS50076">
    <property type="entry name" value="DNAJ_2"/>
    <property type="match status" value="1"/>
</dbReference>
<organism>
    <name type="scientific">Bos taurus</name>
    <name type="common">Bovine</name>
    <dbReference type="NCBI Taxonomy" id="9913"/>
    <lineage>
        <taxon>Eukaryota</taxon>
        <taxon>Metazoa</taxon>
        <taxon>Chordata</taxon>
        <taxon>Craniata</taxon>
        <taxon>Vertebrata</taxon>
        <taxon>Euteleostomi</taxon>
        <taxon>Mammalia</taxon>
        <taxon>Eutheria</taxon>
        <taxon>Laurasiatheria</taxon>
        <taxon>Artiodactyla</taxon>
        <taxon>Ruminantia</taxon>
        <taxon>Pecora</taxon>
        <taxon>Bovidae</taxon>
        <taxon>Bovinae</taxon>
        <taxon>Bos</taxon>
    </lineage>
</organism>
<name>DNJB4_BOVIN</name>
<gene>
    <name type="primary">DNAJB4</name>
</gene>
<keyword id="KW-1003">Cell membrane</keyword>
<keyword id="KW-0143">Chaperone</keyword>
<keyword id="KW-0963">Cytoplasm</keyword>
<keyword id="KW-0472">Membrane</keyword>
<keyword id="KW-0597">Phosphoprotein</keyword>
<keyword id="KW-1185">Reference proteome</keyword>
<comment type="function">
    <text evidence="1">Probable chaperone. Stimulates ATP hydrolysis and the folding of unfolded proteins mediated by HSPA1A/B (in vitro).</text>
</comment>
<comment type="subunit">
    <text evidence="1">Homodimer. The C-terminal section interacts with the C-terminal tail of OPRM1. Also interacts with SDIM1.</text>
</comment>
<comment type="subcellular location">
    <subcellularLocation>
        <location evidence="1">Cytoplasm</location>
    </subcellularLocation>
    <subcellularLocation>
        <location evidence="1">Cell membrane</location>
    </subcellularLocation>
</comment>
<protein>
    <recommendedName>
        <fullName>DnaJ homolog subfamily B member 4</fullName>
    </recommendedName>
</protein>